<dbReference type="SMR" id="C0HJV3"/>
<dbReference type="GO" id="GO:0005576">
    <property type="term" value="C:extracellular region"/>
    <property type="evidence" value="ECO:0007669"/>
    <property type="project" value="UniProtKB-SubCell"/>
</dbReference>
<dbReference type="GO" id="GO:0090729">
    <property type="term" value="F:toxin activity"/>
    <property type="evidence" value="ECO:0007669"/>
    <property type="project" value="UniProtKB-KW"/>
</dbReference>
<dbReference type="GO" id="GO:0042742">
    <property type="term" value="P:defense response to bacterium"/>
    <property type="evidence" value="ECO:0007669"/>
    <property type="project" value="UniProtKB-KW"/>
</dbReference>
<name>CTX21_LACTA</name>
<sequence>SWDSIWKSAKNKMDKIMRQKVAKWMAKKEGKSVEEVQAKVDAMSKKDIRLHVISHYGKKAFEQLSKSLE</sequence>
<feature type="peptide" id="PRO_0000437249" description="Cytoinsectotoxin-2a" evidence="2">
    <location>
        <begin position="1"/>
        <end position="69"/>
    </location>
</feature>
<reference evidence="4" key="1">
    <citation type="journal article" date="2016" name="Biochem. J.">
        <title>Lachesana tarabaevi, an expert in membrane-active toxins.</title>
        <authorList>
            <person name="Kuzmenkov A.I."/>
            <person name="Sachkova M.Y."/>
            <person name="Kovalchuk S.I."/>
            <person name="Grishin E.V."/>
            <person name="Vassilevski A.A."/>
        </authorList>
    </citation>
    <scope>PROTEIN SEQUENCE</scope>
    <scope>FUNCTION</scope>
    <scope>SUBCELLULAR LOCATION</scope>
    <scope>MASS SPECTROMETRY</scope>
    <scope>TOXIC DOSE</scope>
    <source>
        <tissue evidence="3">Venom</tissue>
    </source>
</reference>
<keyword id="KW-0044">Antibiotic</keyword>
<keyword id="KW-0929">Antimicrobial</keyword>
<keyword id="KW-0903">Direct protein sequencing</keyword>
<keyword id="KW-0964">Secreted</keyword>
<keyword id="KW-0800">Toxin</keyword>
<protein>
    <recommendedName>
        <fullName evidence="3">Cytoinsectotoxin-2a</fullName>
        <shortName evidence="3">CIT-2a</shortName>
    </recommendedName>
</protein>
<accession>C0HJV3</accession>
<comment type="function">
    <text evidence="2">Insecticidal and antimicrobial peptide. Has insecticidal activity against larvae of flesh fly S.carnaria. Has antibacterial activity against Gram-positive bacterium B.subtilis B-501 (MIC=1.25 uM) and Gram-negative bacterium E.coli DH5alpha (MIC=2.5 uM).</text>
</comment>
<comment type="subcellular location">
    <subcellularLocation>
        <location evidence="2">Secreted</location>
    </subcellularLocation>
</comment>
<comment type="tissue specificity">
    <text evidence="5">Expressed by the venom gland.</text>
</comment>
<comment type="domain">
    <text evidence="1">Both the N-terminus (1-33) and the C-terminus (38-69) of the mature peptide form alpha-helices which probably disrupt target cell membranes. The linker region (34-37) probably derives from a processing quadruplet motif (PQM), found in propeptides of many zodatoxins, hinting at a fusion of two originally separate membrane-active peptides.</text>
</comment>
<comment type="mass spectrometry"/>
<comment type="toxic dose">
    <text evidence="2">LD(50) is 40 ug/g in larvae of flesh fly S.carnaria.</text>
</comment>
<comment type="similarity">
    <text evidence="4">Belongs to the cationic peptide 06 (cytoinsectotoxin) family.</text>
</comment>
<evidence type="ECO:0000250" key="1">
    <source>
        <dbReference type="UniProtKB" id="P85253"/>
    </source>
</evidence>
<evidence type="ECO:0000269" key="2">
    <source>
    </source>
</evidence>
<evidence type="ECO:0000303" key="3">
    <source>
    </source>
</evidence>
<evidence type="ECO:0000305" key="4"/>
<evidence type="ECO:0000305" key="5">
    <source>
    </source>
</evidence>
<organism evidence="3">
    <name type="scientific">Lachesana tarabaevi</name>
    <name type="common">Spider</name>
    <dbReference type="NCBI Taxonomy" id="379576"/>
    <lineage>
        <taxon>Eukaryota</taxon>
        <taxon>Metazoa</taxon>
        <taxon>Ecdysozoa</taxon>
        <taxon>Arthropoda</taxon>
        <taxon>Chelicerata</taxon>
        <taxon>Arachnida</taxon>
        <taxon>Araneae</taxon>
        <taxon>Araneomorphae</taxon>
        <taxon>Entelegynae</taxon>
        <taxon>Entelegynae incertae sedis</taxon>
        <taxon>Zodariidae</taxon>
        <taxon>Lachesana</taxon>
    </lineage>
</organism>
<proteinExistence type="evidence at protein level"/>